<feature type="chain" id="PRO_0000114320" description="DnaA regulatory inactivator Hda">
    <location>
        <begin position="1"/>
        <end position="241"/>
    </location>
</feature>
<name>HDA_SALTY</name>
<organism>
    <name type="scientific">Salmonella typhimurium (strain LT2 / SGSC1412 / ATCC 700720)</name>
    <dbReference type="NCBI Taxonomy" id="99287"/>
    <lineage>
        <taxon>Bacteria</taxon>
        <taxon>Pseudomonadati</taxon>
        <taxon>Pseudomonadota</taxon>
        <taxon>Gammaproteobacteria</taxon>
        <taxon>Enterobacterales</taxon>
        <taxon>Enterobacteriaceae</taxon>
        <taxon>Salmonella</taxon>
    </lineage>
</organism>
<keyword id="KW-0235">DNA replication</keyword>
<keyword id="KW-0236">DNA replication inhibitor</keyword>
<keyword id="KW-1185">Reference proteome</keyword>
<protein>
    <recommendedName>
        <fullName evidence="2">DnaA regulatory inactivator Hda</fullName>
    </recommendedName>
</protein>
<dbReference type="EMBL" id="AE006468">
    <property type="protein sequence ID" value="AAL21390.1"/>
    <property type="molecule type" value="Genomic_DNA"/>
</dbReference>
<dbReference type="RefSeq" id="WP_000100388.1">
    <property type="nucleotide sequence ID" value="NC_003197.2"/>
</dbReference>
<dbReference type="SMR" id="Q7CQ21"/>
<dbReference type="STRING" id="99287.STM2496"/>
<dbReference type="PaxDb" id="99287-STM2496"/>
<dbReference type="KEGG" id="stm:STM2496"/>
<dbReference type="PATRIC" id="fig|99287.12.peg.2634"/>
<dbReference type="HOGENOM" id="CLU_072265_1_1_6"/>
<dbReference type="OMA" id="DWGQIYR"/>
<dbReference type="PhylomeDB" id="Q7CQ21"/>
<dbReference type="BioCyc" id="SENT99287:STM2496-MONOMER"/>
<dbReference type="Proteomes" id="UP000001014">
    <property type="component" value="Chromosome"/>
</dbReference>
<dbReference type="GO" id="GO:0006260">
    <property type="term" value="P:DNA replication"/>
    <property type="evidence" value="ECO:0000318"/>
    <property type="project" value="GO_Central"/>
</dbReference>
<dbReference type="GO" id="GO:0006270">
    <property type="term" value="P:DNA replication initiation"/>
    <property type="evidence" value="ECO:0000318"/>
    <property type="project" value="GO_Central"/>
</dbReference>
<dbReference type="GO" id="GO:0032297">
    <property type="term" value="P:negative regulation of DNA-templated DNA replication initiation"/>
    <property type="evidence" value="ECO:0000318"/>
    <property type="project" value="GO_Central"/>
</dbReference>
<dbReference type="FunFam" id="1.10.8.60:FF:000024">
    <property type="entry name" value="DnaA regulatory inactivator Hda"/>
    <property type="match status" value="1"/>
</dbReference>
<dbReference type="FunFam" id="3.40.50.300:FF:000452">
    <property type="entry name" value="DnaA regulatory inactivator Hda"/>
    <property type="match status" value="1"/>
</dbReference>
<dbReference type="Gene3D" id="1.10.8.60">
    <property type="match status" value="1"/>
</dbReference>
<dbReference type="Gene3D" id="3.40.50.300">
    <property type="entry name" value="P-loop containing nucleotide triphosphate hydrolases"/>
    <property type="match status" value="1"/>
</dbReference>
<dbReference type="HAMAP" id="MF_01158">
    <property type="entry name" value="Hda"/>
    <property type="match status" value="1"/>
</dbReference>
<dbReference type="InterPro" id="IPR020591">
    <property type="entry name" value="Chromosome_initiator_DnaA-like"/>
</dbReference>
<dbReference type="InterPro" id="IPR013317">
    <property type="entry name" value="DnaA_dom"/>
</dbReference>
<dbReference type="InterPro" id="IPR017788">
    <property type="entry name" value="Hda"/>
</dbReference>
<dbReference type="InterPro" id="IPR022864">
    <property type="entry name" value="Hda_Enterobact"/>
</dbReference>
<dbReference type="InterPro" id="IPR055199">
    <property type="entry name" value="Hda_lid"/>
</dbReference>
<dbReference type="InterPro" id="IPR027417">
    <property type="entry name" value="P-loop_NTPase"/>
</dbReference>
<dbReference type="NCBIfam" id="TIGR03420">
    <property type="entry name" value="DnaA_homol_Hda"/>
    <property type="match status" value="1"/>
</dbReference>
<dbReference type="NCBIfam" id="NF005982">
    <property type="entry name" value="PRK08084.1"/>
    <property type="match status" value="1"/>
</dbReference>
<dbReference type="PANTHER" id="PTHR30050">
    <property type="entry name" value="CHROMOSOMAL REPLICATION INITIATOR PROTEIN DNAA"/>
    <property type="match status" value="1"/>
</dbReference>
<dbReference type="PANTHER" id="PTHR30050:SF5">
    <property type="entry name" value="DNAA REGULATORY INACTIVATOR HDA"/>
    <property type="match status" value="1"/>
</dbReference>
<dbReference type="Pfam" id="PF00308">
    <property type="entry name" value="Bac_DnaA"/>
    <property type="match status" value="1"/>
</dbReference>
<dbReference type="Pfam" id="PF22688">
    <property type="entry name" value="Hda_lid"/>
    <property type="match status" value="1"/>
</dbReference>
<dbReference type="PRINTS" id="PR00051">
    <property type="entry name" value="DNAA"/>
</dbReference>
<dbReference type="SUPFAM" id="SSF52540">
    <property type="entry name" value="P-loop containing nucleoside triphosphate hydrolases"/>
    <property type="match status" value="1"/>
</dbReference>
<comment type="function">
    <text evidence="1">Mediates the interaction of DNA replication initiator protein DnaA with DNA polymerase subunit beta sliding clamp (dnaN). Stimulates hydrolysis of ATP-DnaA to ADP-DnaA, rendering DnaA inactive for reinitiation, a process called regulatory inhibition of DnaA or RIDA (By similarity).</text>
</comment>
<comment type="subunit">
    <text evidence="2">The active form seems to be an ADP-bound monomer. Forms the RIDA complex (regulatory inactivation of DnaA) of ATP-DnaA, ADP-Hda and the DNA-loaded beta sliding clamp (dnaN).</text>
</comment>
<comment type="similarity">
    <text evidence="2">Belongs to the DnaA family. HdA subfamily.</text>
</comment>
<reference key="1">
    <citation type="journal article" date="2001" name="Nature">
        <title>Complete genome sequence of Salmonella enterica serovar Typhimurium LT2.</title>
        <authorList>
            <person name="McClelland M."/>
            <person name="Sanderson K.E."/>
            <person name="Spieth J."/>
            <person name="Clifton S.W."/>
            <person name="Latreille P."/>
            <person name="Courtney L."/>
            <person name="Porwollik S."/>
            <person name="Ali J."/>
            <person name="Dante M."/>
            <person name="Du F."/>
            <person name="Hou S."/>
            <person name="Layman D."/>
            <person name="Leonard S."/>
            <person name="Nguyen C."/>
            <person name="Scott K."/>
            <person name="Holmes A."/>
            <person name="Grewal N."/>
            <person name="Mulvaney E."/>
            <person name="Ryan E."/>
            <person name="Sun H."/>
            <person name="Florea L."/>
            <person name="Miller W."/>
            <person name="Stoneking T."/>
            <person name="Nhan M."/>
            <person name="Waterston R."/>
            <person name="Wilson R.K."/>
        </authorList>
    </citation>
    <scope>NUCLEOTIDE SEQUENCE [LARGE SCALE GENOMIC DNA]</scope>
    <source>
        <strain>LT2 / SGSC1412 / ATCC 700720</strain>
    </source>
</reference>
<sequence>MSSWVEVSLNTPAQLSLPLYLPDDETFASFWPGDNASLLAALQNVLRQEHSGYIYLWAREGAGRSHLLHAACAELSQRGDAVGYVPLDKRTWFVPEVLDGMEHLSLVCIDNIECVAGDELWEMAIFDLYNRILESGKTRLLITGDRPPRQLNLGLPDLASRLDWGQIYKLQPLSDEDKLQALQLRARLRGFELPEDVGRFLLKRLDREMRTLFMTLDQLDHASITAQRKLTIPFVKEILKL</sequence>
<accession>Q7CQ21</accession>
<gene>
    <name evidence="2" type="primary">hda</name>
    <name type="ordered locus">STM2496</name>
</gene>
<proteinExistence type="inferred from homology"/>
<evidence type="ECO:0000250" key="1"/>
<evidence type="ECO:0000255" key="2">
    <source>
        <dbReference type="HAMAP-Rule" id="MF_01158"/>
    </source>
</evidence>